<reference key="1">
    <citation type="journal article" date="2000" name="Nature">
        <title>DNA sequence of both chromosomes of the cholera pathogen Vibrio cholerae.</title>
        <authorList>
            <person name="Heidelberg J.F."/>
            <person name="Eisen J.A."/>
            <person name="Nelson W.C."/>
            <person name="Clayton R.A."/>
            <person name="Gwinn M.L."/>
            <person name="Dodson R.J."/>
            <person name="Haft D.H."/>
            <person name="Hickey E.K."/>
            <person name="Peterson J.D."/>
            <person name="Umayam L.A."/>
            <person name="Gill S.R."/>
            <person name="Nelson K.E."/>
            <person name="Read T.D."/>
            <person name="Tettelin H."/>
            <person name="Richardson D.L."/>
            <person name="Ermolaeva M.D."/>
            <person name="Vamathevan J.J."/>
            <person name="Bass S."/>
            <person name="Qin H."/>
            <person name="Dragoi I."/>
            <person name="Sellers P."/>
            <person name="McDonald L.A."/>
            <person name="Utterback T.R."/>
            <person name="Fleischmann R.D."/>
            <person name="Nierman W.C."/>
            <person name="White O."/>
            <person name="Salzberg S.L."/>
            <person name="Smith H.O."/>
            <person name="Colwell R.R."/>
            <person name="Mekalanos J.J."/>
            <person name="Venter J.C."/>
            <person name="Fraser C.M."/>
        </authorList>
    </citation>
    <scope>NUCLEOTIDE SEQUENCE [LARGE SCALE GENOMIC DNA]</scope>
    <source>
        <strain>ATCC 39315 / El Tor Inaba N16961</strain>
    </source>
</reference>
<proteinExistence type="inferred from homology"/>
<organism>
    <name type="scientific">Vibrio cholerae serotype O1 (strain ATCC 39315 / El Tor Inaba N16961)</name>
    <dbReference type="NCBI Taxonomy" id="243277"/>
    <lineage>
        <taxon>Bacteria</taxon>
        <taxon>Pseudomonadati</taxon>
        <taxon>Pseudomonadota</taxon>
        <taxon>Gammaproteobacteria</taxon>
        <taxon>Vibrionales</taxon>
        <taxon>Vibrionaceae</taxon>
        <taxon>Vibrio</taxon>
    </lineage>
</organism>
<accession>Q9KQR7</accession>
<feature type="chain" id="PRO_0000121433" description="Protein nucleotidyltransferase YdiU">
    <location>
        <begin position="1"/>
        <end position="489"/>
    </location>
</feature>
<feature type="active site" description="Proton acceptor" evidence="1">
    <location>
        <position position="250"/>
    </location>
</feature>
<feature type="binding site" evidence="1">
    <location>
        <position position="88"/>
    </location>
    <ligand>
        <name>ATP</name>
        <dbReference type="ChEBI" id="CHEBI:30616"/>
    </ligand>
</feature>
<feature type="binding site" evidence="1">
    <location>
        <position position="90"/>
    </location>
    <ligand>
        <name>ATP</name>
        <dbReference type="ChEBI" id="CHEBI:30616"/>
    </ligand>
</feature>
<feature type="binding site" evidence="1">
    <location>
        <position position="91"/>
    </location>
    <ligand>
        <name>ATP</name>
        <dbReference type="ChEBI" id="CHEBI:30616"/>
    </ligand>
</feature>
<feature type="binding site" evidence="1">
    <location>
        <position position="111"/>
    </location>
    <ligand>
        <name>ATP</name>
        <dbReference type="ChEBI" id="CHEBI:30616"/>
    </ligand>
</feature>
<feature type="binding site" evidence="1">
    <location>
        <position position="123"/>
    </location>
    <ligand>
        <name>ATP</name>
        <dbReference type="ChEBI" id="CHEBI:30616"/>
    </ligand>
</feature>
<feature type="binding site" evidence="1">
    <location>
        <position position="124"/>
    </location>
    <ligand>
        <name>ATP</name>
        <dbReference type="ChEBI" id="CHEBI:30616"/>
    </ligand>
</feature>
<feature type="binding site" evidence="1">
    <location>
        <position position="174"/>
    </location>
    <ligand>
        <name>ATP</name>
        <dbReference type="ChEBI" id="CHEBI:30616"/>
    </ligand>
</feature>
<feature type="binding site" evidence="1">
    <location>
        <position position="181"/>
    </location>
    <ligand>
        <name>ATP</name>
        <dbReference type="ChEBI" id="CHEBI:30616"/>
    </ligand>
</feature>
<feature type="binding site" evidence="1">
    <location>
        <position position="251"/>
    </location>
    <ligand>
        <name>Mg(2+)</name>
        <dbReference type="ChEBI" id="CHEBI:18420"/>
    </ligand>
</feature>
<feature type="binding site" evidence="1">
    <location>
        <position position="260"/>
    </location>
    <ligand>
        <name>ATP</name>
        <dbReference type="ChEBI" id="CHEBI:30616"/>
    </ligand>
</feature>
<feature type="binding site" evidence="1">
    <location>
        <position position="260"/>
    </location>
    <ligand>
        <name>Mg(2+)</name>
        <dbReference type="ChEBI" id="CHEBI:18420"/>
    </ligand>
</feature>
<keyword id="KW-0067">ATP-binding</keyword>
<keyword id="KW-0460">Magnesium</keyword>
<keyword id="KW-0464">Manganese</keyword>
<keyword id="KW-0479">Metal-binding</keyword>
<keyword id="KW-0547">Nucleotide-binding</keyword>
<keyword id="KW-0548">Nucleotidyltransferase</keyword>
<keyword id="KW-1185">Reference proteome</keyword>
<keyword id="KW-0808">Transferase</keyword>
<gene>
    <name evidence="1" type="primary">ydiU</name>
    <name evidence="1" type="synonym">selO</name>
    <name type="ordered locus">VC_1931</name>
</gene>
<sequence length="489" mass="55630">MSVWNAVHLSRRFAALPQAFYTPVHPQPLQNVRWGMWNSRLAQQFGLPEAPNDELLLSLSGQQLPADFSPVAMKYAGHQFGVYNPDLGDGRGLLLAEMATKQGEVFDIHLKGAGLTPYSRMGDGRAVLRSSLREYLCSEAMAGLGIATTRALALMSSETPVYREREERGALLVRLAHTHVRFGHFEHFFYTDQHANLKLLADKVIEWHFPDCVQTSKPYAAWFSQVVERTALMIAQWQAYGFNHGVMNTDNMSILGETFDYGPFAFLDDYDPNFICNHSDYQGRYAFDQQPRIGLWNLSALAHALSPLIDKDDLEAALGSYSERLNLHFSRLMRAKLGLATQQEGDGELFADFFALLANNHTDYTRFLRELSCLDRQGNEAVIDLVLDREAAKTWLTRYLERAARELGQEGRPISTRERCQAMRQVNPKYILRNYLAQQAIEFAERGDFEEMQRLATVLASPYAEHPEFERYAKLPPEWGKKLEISCSS</sequence>
<name>SELO_VIBCH</name>
<evidence type="ECO:0000255" key="1">
    <source>
        <dbReference type="HAMAP-Rule" id="MF_00692"/>
    </source>
</evidence>
<evidence type="ECO:0000305" key="2"/>
<protein>
    <recommendedName>
        <fullName evidence="1">Protein nucleotidyltransferase YdiU</fullName>
        <ecNumber evidence="1">2.7.7.-</ecNumber>
    </recommendedName>
    <alternativeName>
        <fullName evidence="1">Protein adenylyltransferase YdiU</fullName>
        <ecNumber evidence="1">2.7.7.108</ecNumber>
    </alternativeName>
    <alternativeName>
        <fullName evidence="1">Protein uridylyltransferase YdiU</fullName>
        <ecNumber evidence="1">2.7.7.-</ecNumber>
    </alternativeName>
</protein>
<dbReference type="EC" id="2.7.7.-" evidence="1"/>
<dbReference type="EC" id="2.7.7.108" evidence="1"/>
<dbReference type="EMBL" id="AE003852">
    <property type="protein sequence ID" value="AAF95079.1"/>
    <property type="status" value="ALT_INIT"/>
    <property type="molecule type" value="Genomic_DNA"/>
</dbReference>
<dbReference type="PIR" id="C82138">
    <property type="entry name" value="C82138"/>
</dbReference>
<dbReference type="RefSeq" id="NP_231565.1">
    <property type="nucleotide sequence ID" value="NC_002505.1"/>
</dbReference>
<dbReference type="RefSeq" id="WP_000118044.1">
    <property type="nucleotide sequence ID" value="NZ_LT906614.1"/>
</dbReference>
<dbReference type="SMR" id="Q9KQR7"/>
<dbReference type="STRING" id="243277.VC_1931"/>
<dbReference type="DNASU" id="2613560"/>
<dbReference type="EnsemblBacteria" id="AAF95079">
    <property type="protein sequence ID" value="AAF95079"/>
    <property type="gene ID" value="VC_1931"/>
</dbReference>
<dbReference type="KEGG" id="vch:VC_1931"/>
<dbReference type="PATRIC" id="fig|243277.26.peg.1847"/>
<dbReference type="eggNOG" id="COG0397">
    <property type="taxonomic scope" value="Bacteria"/>
</dbReference>
<dbReference type="HOGENOM" id="CLU_010245_4_0_6"/>
<dbReference type="Proteomes" id="UP000000584">
    <property type="component" value="Chromosome 1"/>
</dbReference>
<dbReference type="GO" id="GO:0070733">
    <property type="term" value="F:AMPylase activity"/>
    <property type="evidence" value="ECO:0000318"/>
    <property type="project" value="GO_Central"/>
</dbReference>
<dbReference type="GO" id="GO:0005524">
    <property type="term" value="F:ATP binding"/>
    <property type="evidence" value="ECO:0007669"/>
    <property type="project" value="UniProtKB-UniRule"/>
</dbReference>
<dbReference type="GO" id="GO:0000287">
    <property type="term" value="F:magnesium ion binding"/>
    <property type="evidence" value="ECO:0007669"/>
    <property type="project" value="UniProtKB-UniRule"/>
</dbReference>
<dbReference type="HAMAP" id="MF_00692">
    <property type="entry name" value="YdiU_SelO"/>
    <property type="match status" value="1"/>
</dbReference>
<dbReference type="InterPro" id="IPR003846">
    <property type="entry name" value="SelO"/>
</dbReference>
<dbReference type="NCBIfam" id="NF000658">
    <property type="entry name" value="PRK00029.1"/>
    <property type="match status" value="1"/>
</dbReference>
<dbReference type="PANTHER" id="PTHR32057">
    <property type="entry name" value="PROTEIN ADENYLYLTRANSFERASE SELO, MITOCHONDRIAL"/>
    <property type="match status" value="1"/>
</dbReference>
<dbReference type="PANTHER" id="PTHR32057:SF14">
    <property type="entry name" value="PROTEIN ADENYLYLTRANSFERASE SELO, MITOCHONDRIAL"/>
    <property type="match status" value="1"/>
</dbReference>
<dbReference type="Pfam" id="PF02696">
    <property type="entry name" value="SelO"/>
    <property type="match status" value="1"/>
</dbReference>
<comment type="function">
    <text evidence="1">Nucleotidyltransferase involved in the post-translational modification of proteins. It can catalyze the addition of adenosine monophosphate (AMP) or uridine monophosphate (UMP) to a protein, resulting in modifications known as AMPylation and UMPylation.</text>
</comment>
<comment type="catalytic activity">
    <reaction evidence="1">
        <text>L-seryl-[protein] + ATP = 3-O-(5'-adenylyl)-L-seryl-[protein] + diphosphate</text>
        <dbReference type="Rhea" id="RHEA:58120"/>
        <dbReference type="Rhea" id="RHEA-COMP:9863"/>
        <dbReference type="Rhea" id="RHEA-COMP:15073"/>
        <dbReference type="ChEBI" id="CHEBI:29999"/>
        <dbReference type="ChEBI" id="CHEBI:30616"/>
        <dbReference type="ChEBI" id="CHEBI:33019"/>
        <dbReference type="ChEBI" id="CHEBI:142516"/>
        <dbReference type="EC" id="2.7.7.108"/>
    </reaction>
</comment>
<comment type="catalytic activity">
    <reaction evidence="1">
        <text>L-threonyl-[protein] + ATP = 3-O-(5'-adenylyl)-L-threonyl-[protein] + diphosphate</text>
        <dbReference type="Rhea" id="RHEA:54292"/>
        <dbReference type="Rhea" id="RHEA-COMP:11060"/>
        <dbReference type="Rhea" id="RHEA-COMP:13847"/>
        <dbReference type="ChEBI" id="CHEBI:30013"/>
        <dbReference type="ChEBI" id="CHEBI:30616"/>
        <dbReference type="ChEBI" id="CHEBI:33019"/>
        <dbReference type="ChEBI" id="CHEBI:138113"/>
        <dbReference type="EC" id="2.7.7.108"/>
    </reaction>
</comment>
<comment type="catalytic activity">
    <reaction evidence="1">
        <text>L-tyrosyl-[protein] + ATP = O-(5'-adenylyl)-L-tyrosyl-[protein] + diphosphate</text>
        <dbReference type="Rhea" id="RHEA:54288"/>
        <dbReference type="Rhea" id="RHEA-COMP:10136"/>
        <dbReference type="Rhea" id="RHEA-COMP:13846"/>
        <dbReference type="ChEBI" id="CHEBI:30616"/>
        <dbReference type="ChEBI" id="CHEBI:33019"/>
        <dbReference type="ChEBI" id="CHEBI:46858"/>
        <dbReference type="ChEBI" id="CHEBI:83624"/>
        <dbReference type="EC" id="2.7.7.108"/>
    </reaction>
</comment>
<comment type="catalytic activity">
    <reaction evidence="1">
        <text>L-histidyl-[protein] + UTP = N(tele)-(5'-uridylyl)-L-histidyl-[protein] + diphosphate</text>
        <dbReference type="Rhea" id="RHEA:83891"/>
        <dbReference type="Rhea" id="RHEA-COMP:9745"/>
        <dbReference type="Rhea" id="RHEA-COMP:20239"/>
        <dbReference type="ChEBI" id="CHEBI:29979"/>
        <dbReference type="ChEBI" id="CHEBI:33019"/>
        <dbReference type="ChEBI" id="CHEBI:46398"/>
        <dbReference type="ChEBI" id="CHEBI:233474"/>
    </reaction>
</comment>
<comment type="catalytic activity">
    <reaction evidence="1">
        <text>L-seryl-[protein] + UTP = O-(5'-uridylyl)-L-seryl-[protein] + diphosphate</text>
        <dbReference type="Rhea" id="RHEA:64604"/>
        <dbReference type="Rhea" id="RHEA-COMP:9863"/>
        <dbReference type="Rhea" id="RHEA-COMP:16635"/>
        <dbReference type="ChEBI" id="CHEBI:29999"/>
        <dbReference type="ChEBI" id="CHEBI:33019"/>
        <dbReference type="ChEBI" id="CHEBI:46398"/>
        <dbReference type="ChEBI" id="CHEBI:156051"/>
    </reaction>
</comment>
<comment type="catalytic activity">
    <reaction evidence="1">
        <text>L-tyrosyl-[protein] + UTP = O-(5'-uridylyl)-L-tyrosyl-[protein] + diphosphate</text>
        <dbReference type="Rhea" id="RHEA:83887"/>
        <dbReference type="Rhea" id="RHEA-COMP:10136"/>
        <dbReference type="Rhea" id="RHEA-COMP:20238"/>
        <dbReference type="ChEBI" id="CHEBI:33019"/>
        <dbReference type="ChEBI" id="CHEBI:46398"/>
        <dbReference type="ChEBI" id="CHEBI:46858"/>
        <dbReference type="ChEBI" id="CHEBI:90602"/>
    </reaction>
</comment>
<comment type="cofactor">
    <cofactor evidence="1">
        <name>Mg(2+)</name>
        <dbReference type="ChEBI" id="CHEBI:18420"/>
    </cofactor>
    <cofactor evidence="1">
        <name>Mn(2+)</name>
        <dbReference type="ChEBI" id="CHEBI:29035"/>
    </cofactor>
</comment>
<comment type="similarity">
    <text evidence="1">Belongs to the SELO family.</text>
</comment>
<comment type="sequence caution" evidence="2">
    <conflict type="erroneous initiation">
        <sequence resource="EMBL-CDS" id="AAF95079"/>
    </conflict>
</comment>